<keyword id="KW-1003">Cell membrane</keyword>
<keyword id="KW-0472">Membrane</keyword>
<keyword id="KW-1185">Reference proteome</keyword>
<keyword id="KW-0812">Transmembrane</keyword>
<keyword id="KW-1133">Transmembrane helix</keyword>
<proteinExistence type="evidence at transcript level"/>
<sequence>MRLGGPWAWLLGLPTAVVYGSLALFVSVLHNVFLLYYVDTFVSVYKIDKAAFWVGETVFLLWNSLNDPLFGWLSDRQFLSSQPRSGAGLSSRAVVLARVRALGWHGPLLALSFLAFWVPWAPAGLQFLLCLCLYDGFLTLVDLHHHALLADLALSAHDRTHLNFYCSLFSAAGSLSVFASYAFWNKEDFSSFRAFCLALATGSGLGFVGAARLLRRRVEAAGREPGCPAMAVNDGLCEEELLVGGEEAGSITLGQYLQQLARHRNFLWFVGMDLVQVFHCHFNSNFFPLFLEHLLSDHISLSTGSFLLGISYVAPHLNNLYFLPLCRRWGVYAVVRGLFLLKLGLSLLMLLAGPDHPGLLCLFIASNRVFTEGTCKLLTLVVTDLVDEDLVLNHRKQAASALLFGMVALVTKPGQTFAPLLGTWLLCFYTGHDLFQQHPPAPVGSAQPWPEPPAPPPAQAPPLRQGCFYLLVLVPIACALLQLFTWSQFTLHGRRLHMVKAQRQSLSRAQTLDVKMV</sequence>
<organism>
    <name type="scientific">Bos taurus</name>
    <name type="common">Bovine</name>
    <dbReference type="NCBI Taxonomy" id="9913"/>
    <lineage>
        <taxon>Eukaryota</taxon>
        <taxon>Metazoa</taxon>
        <taxon>Chordata</taxon>
        <taxon>Craniata</taxon>
        <taxon>Vertebrata</taxon>
        <taxon>Euteleostomi</taxon>
        <taxon>Mammalia</taxon>
        <taxon>Eutheria</taxon>
        <taxon>Laurasiatheria</taxon>
        <taxon>Artiodactyla</taxon>
        <taxon>Ruminantia</taxon>
        <taxon>Pecora</taxon>
        <taxon>Bovidae</taxon>
        <taxon>Bovinae</taxon>
        <taxon>Bos</taxon>
    </lineage>
</organism>
<feature type="chain" id="PRO_0000256223" description="Transmembrane protein 180">
    <location>
        <begin position="1"/>
        <end position="517"/>
    </location>
</feature>
<feature type="topological domain" description="Extracellular" evidence="2">
    <location>
        <begin position="1"/>
        <end position="11"/>
    </location>
</feature>
<feature type="transmembrane region" description="Helical" evidence="1">
    <location>
        <begin position="12"/>
        <end position="43"/>
    </location>
</feature>
<feature type="topological domain" description="Cytoplasmic" evidence="2">
    <location>
        <begin position="44"/>
        <end position="55"/>
    </location>
</feature>
<feature type="transmembrane region" description="Helical" evidence="1">
    <location>
        <begin position="56"/>
        <end position="74"/>
    </location>
</feature>
<feature type="topological domain" description="Extracellular" evidence="2">
    <location>
        <begin position="75"/>
        <end position="100"/>
    </location>
</feature>
<feature type="transmembrane region" description="Helical" evidence="1">
    <location>
        <begin position="101"/>
        <end position="118"/>
    </location>
</feature>
<feature type="topological domain" description="Cytoplasmic" evidence="2">
    <location>
        <begin position="119"/>
        <end position="126"/>
    </location>
</feature>
<feature type="transmembrane region" description="Helical" evidence="1">
    <location>
        <begin position="127"/>
        <end position="151"/>
    </location>
</feature>
<feature type="topological domain" description="Extracellular" evidence="2">
    <location>
        <begin position="152"/>
        <end position="155"/>
    </location>
</feature>
<feature type="transmembrane region" description="Helical" evidence="1">
    <location>
        <begin position="156"/>
        <end position="179"/>
    </location>
</feature>
<feature type="topological domain" description="Cytoplasmic" evidence="2">
    <location>
        <begin position="180"/>
        <end position="191"/>
    </location>
</feature>
<feature type="transmembrane region" description="Helical" evidence="1">
    <location>
        <begin position="192"/>
        <end position="223"/>
    </location>
</feature>
<feature type="topological domain" description="Extracellular" evidence="2">
    <location>
        <begin position="224"/>
        <end position="264"/>
    </location>
</feature>
<feature type="transmembrane region" description="Helical" evidence="1">
    <location>
        <begin position="265"/>
        <end position="292"/>
    </location>
</feature>
<feature type="topological domain" description="Cytoplasmic" evidence="2">
    <location>
        <begin position="293"/>
        <end position="305"/>
    </location>
</feature>
<feature type="transmembrane region" description="Helical" evidence="1">
    <location>
        <begin position="306"/>
        <end position="325"/>
    </location>
</feature>
<feature type="topological domain" description="Extracellular" evidence="2">
    <location>
        <begin position="326"/>
        <end position="330"/>
    </location>
</feature>
<feature type="transmembrane region" description="Helical" evidence="1">
    <location>
        <begin position="331"/>
        <end position="350"/>
    </location>
</feature>
<feature type="topological domain" description="Cytoplasmic" evidence="2">
    <location>
        <begin position="351"/>
        <end position="358"/>
    </location>
</feature>
<feature type="transmembrane region" description="Helical" evidence="1">
    <location>
        <begin position="359"/>
        <end position="393"/>
    </location>
</feature>
<feature type="topological domain" description="Extracellular" evidence="2">
    <location>
        <begin position="394"/>
        <end position="402"/>
    </location>
</feature>
<feature type="transmembrane region" description="Helical" evidence="1">
    <location>
        <begin position="403"/>
        <end position="429"/>
    </location>
</feature>
<feature type="topological domain" description="Cytoplasmic" evidence="2">
    <location>
        <begin position="430"/>
        <end position="466"/>
    </location>
</feature>
<feature type="transmembrane region" description="Helical" evidence="1">
    <location>
        <begin position="467"/>
        <end position="485"/>
    </location>
</feature>
<feature type="topological domain" description="Extracellular" evidence="2">
    <location>
        <begin position="486"/>
        <end position="517"/>
    </location>
</feature>
<reference key="1">
    <citation type="journal article" date="2005" name="BMC Genomics">
        <title>Characterization of 954 bovine full-CDS cDNA sequences.</title>
        <authorList>
            <person name="Harhay G.P."/>
            <person name="Sonstegard T.S."/>
            <person name="Keele J.W."/>
            <person name="Heaton M.P."/>
            <person name="Clawson M.L."/>
            <person name="Snelling W.M."/>
            <person name="Wiedmann R.T."/>
            <person name="Van Tassell C.P."/>
            <person name="Smith T.P.L."/>
        </authorList>
    </citation>
    <scope>NUCLEOTIDE SEQUENCE [LARGE SCALE MRNA]</scope>
</reference>
<reference key="2">
    <citation type="submission" date="2006-08" db="EMBL/GenBank/DDBJ databases">
        <authorList>
            <consortium name="NIH - Mammalian Gene Collection (MGC) project"/>
        </authorList>
    </citation>
    <scope>NUCLEOTIDE SEQUENCE [LARGE SCALE MRNA]</scope>
    <source>
        <strain>Hereford</strain>
        <tissue>Basal ganglia</tissue>
    </source>
</reference>
<name>MF13A_BOVIN</name>
<gene>
    <name evidence="1" type="primary">MFSD13A</name>
    <name evidence="1" type="synonym">TMEM180</name>
</gene>
<evidence type="ECO:0000250" key="1">
    <source>
        <dbReference type="UniProtKB" id="Q14CX5"/>
    </source>
</evidence>
<evidence type="ECO:0000305" key="2"/>
<accession>Q58CT4</accession>
<comment type="subcellular location">
    <subcellularLocation>
        <location evidence="1">Cell membrane</location>
        <topology evidence="1">Multi-pass membrane protein</topology>
    </subcellularLocation>
</comment>
<dbReference type="EMBL" id="BT021863">
    <property type="protein sequence ID" value="AAX46710.1"/>
    <property type="molecule type" value="mRNA"/>
</dbReference>
<dbReference type="EMBL" id="BC119894">
    <property type="protein sequence ID" value="AAI19895.1"/>
    <property type="molecule type" value="mRNA"/>
</dbReference>
<dbReference type="RefSeq" id="NP_001014925.1">
    <property type="nucleotide sequence ID" value="NM_001014925.1"/>
</dbReference>
<dbReference type="RefSeq" id="XP_005225583.1">
    <property type="nucleotide sequence ID" value="XM_005225526.5"/>
</dbReference>
<dbReference type="RefSeq" id="XP_005225584.1">
    <property type="nucleotide sequence ID" value="XM_005225527.3"/>
</dbReference>
<dbReference type="RefSeq" id="XP_010818189.1">
    <property type="nucleotide sequence ID" value="XM_010819887.4"/>
</dbReference>
<dbReference type="RefSeq" id="XP_010818190.1">
    <property type="nucleotide sequence ID" value="XM_010819888.2"/>
</dbReference>
<dbReference type="RefSeq" id="XP_024841377.1">
    <property type="nucleotide sequence ID" value="XM_024985609.2"/>
</dbReference>
<dbReference type="RefSeq" id="XP_059737830.1">
    <property type="nucleotide sequence ID" value="XM_059881847.1"/>
</dbReference>
<dbReference type="RefSeq" id="XP_059737831.1">
    <property type="nucleotide sequence ID" value="XM_059881848.1"/>
</dbReference>
<dbReference type="RefSeq" id="XP_059737832.1">
    <property type="nucleotide sequence ID" value="XM_059881849.1"/>
</dbReference>
<dbReference type="RefSeq" id="XP_059737833.1">
    <property type="nucleotide sequence ID" value="XM_059881850.1"/>
</dbReference>
<dbReference type="RefSeq" id="XP_059737834.1">
    <property type="nucleotide sequence ID" value="XM_059881851.1"/>
</dbReference>
<dbReference type="SMR" id="Q58CT4"/>
<dbReference type="FunCoup" id="Q58CT4">
    <property type="interactions" value="478"/>
</dbReference>
<dbReference type="STRING" id="9913.ENSBTAP00000070800"/>
<dbReference type="PaxDb" id="9913-ENSBTAP00000028052"/>
<dbReference type="Ensembl" id="ENSBTAT00000028052.3">
    <property type="protein sequence ID" value="ENSBTAP00000028052.2"/>
    <property type="gene ID" value="ENSBTAG00000021065.4"/>
</dbReference>
<dbReference type="GeneID" id="514370"/>
<dbReference type="KEGG" id="bta:514370"/>
<dbReference type="CTD" id="79847"/>
<dbReference type="VEuPathDB" id="HostDB:ENSBTAG00000021065"/>
<dbReference type="VGNC" id="VGNC:31434">
    <property type="gene designation" value="MFSD13A"/>
</dbReference>
<dbReference type="eggNOG" id="ENOG502QSW5">
    <property type="taxonomic scope" value="Eukaryota"/>
</dbReference>
<dbReference type="GeneTree" id="ENSGT00940000160317"/>
<dbReference type="HOGENOM" id="CLU_034985_0_0_1"/>
<dbReference type="InParanoid" id="Q58CT4"/>
<dbReference type="OMA" id="WNSVNDP"/>
<dbReference type="OrthoDB" id="62987at2759"/>
<dbReference type="TreeFam" id="TF313122"/>
<dbReference type="Proteomes" id="UP000009136">
    <property type="component" value="Chromosome 26"/>
</dbReference>
<dbReference type="Bgee" id="ENSBTAG00000021065">
    <property type="expression patterns" value="Expressed in Ammon's horn and 104 other cell types or tissues"/>
</dbReference>
<dbReference type="GO" id="GO:0005886">
    <property type="term" value="C:plasma membrane"/>
    <property type="evidence" value="ECO:0000250"/>
    <property type="project" value="UniProtKB"/>
</dbReference>
<dbReference type="CDD" id="cd17481">
    <property type="entry name" value="MFS_MFSD13A"/>
    <property type="match status" value="1"/>
</dbReference>
<dbReference type="InterPro" id="IPR036259">
    <property type="entry name" value="MFS_trans_sf"/>
</dbReference>
<dbReference type="InterPro" id="IPR040035">
    <property type="entry name" value="TMEM180"/>
</dbReference>
<dbReference type="PANTHER" id="PTHR28658">
    <property type="entry name" value="TRANSMEMBRANE PROTEIN 180"/>
    <property type="match status" value="1"/>
</dbReference>
<dbReference type="PANTHER" id="PTHR28658:SF3">
    <property type="entry name" value="TRANSMEMBRANE PROTEIN 180"/>
    <property type="match status" value="1"/>
</dbReference>
<dbReference type="Pfam" id="PF13347">
    <property type="entry name" value="MFS_2"/>
    <property type="match status" value="2"/>
</dbReference>
<dbReference type="SUPFAM" id="SSF103473">
    <property type="entry name" value="MFS general substrate transporter"/>
    <property type="match status" value="1"/>
</dbReference>
<protein>
    <recommendedName>
        <fullName evidence="1">Transmembrane protein 180</fullName>
    </recommendedName>
    <alternativeName>
        <fullName evidence="1">Major facilitator superfamily domain-containing 13A</fullName>
    </alternativeName>
</protein>